<name>AF1L1_DANRE</name>
<comment type="function">
    <text evidence="1">May be involved in podosome and invadosome formation.</text>
</comment>
<comment type="subcellular location">
    <subcellularLocation>
        <location evidence="2">Cytoplasm</location>
    </subcellularLocation>
    <subcellularLocation>
        <location evidence="2">Cell projection</location>
        <location evidence="2">Podosome</location>
    </subcellularLocation>
    <subcellularLocation>
        <location evidence="2">Cell projection</location>
        <location evidence="2">Invadopodium</location>
    </subcellularLocation>
    <subcellularLocation>
        <location evidence="2">Cytoplasm</location>
        <location evidence="2">Cytoskeleton</location>
        <location evidence="2">Stress fiber</location>
    </subcellularLocation>
</comment>
<gene>
    <name type="primary">afap1l1</name>
    <name type="ORF">zgc:114084</name>
</gene>
<evidence type="ECO:0000250" key="1"/>
<evidence type="ECO:0000250" key="2">
    <source>
        <dbReference type="UniProtKB" id="Q8TED9"/>
    </source>
</evidence>
<evidence type="ECO:0000255" key="3"/>
<evidence type="ECO:0000255" key="4">
    <source>
        <dbReference type="PROSITE-ProRule" id="PRU00145"/>
    </source>
</evidence>
<evidence type="ECO:0000256" key="5">
    <source>
        <dbReference type="SAM" id="MobiDB-lite"/>
    </source>
</evidence>
<sequence length="746" mass="84166">MEINSKPMELLVTELNMLLKLLDHETLSCATEEKKMAVKNLLRQLQPSVTAKDYMYVNTSVYRNGTSFVESLFETFDCDLGDLKVEMEDQKKEPEANHTVTKPSKTDSPPPLPNTPPPEDYYEEAVPLSPGKMPEYITSRSSSSPPNSIEDGYYEDAENNYPTTQVNGRRKNSYNDSDALSSSYESYDEEEEEKGQRLTHQWPSEENSMAPVRDCHICAFLLRKKRFGQWAKQLTVIRENRLQCYKSSKDQSPYTDIPLSLCSVIYVPKDGRRKKHELRFTLPGGEALVLAVQSKEQAEKWLHVVRDVTGQGNGLDSPSSPMIPKKIELDKWCSAEKQTSDSDSMPSGESARDIRENGKPKRGALSELTGTVSRAAGRKITRIISFSKRKPPLPGDSRSSFDHDPRCGYVGVLVNRCWREHWCRVRAGSLYLYQEKGEQRVPHTTVGLKGCEVVPGLGPKHPFALRILKGGAEVAALEASCSEDMGRWLGVLLAETGSSADPESLHYDYVDVETIANIRTAARHSFLWATSTGSRTYDEVPFETEQENERLRGRAQTKRRSSFSSSDTGKPSPQITLKRHGSNANQYGRYGKTRAQEDARRYLKEKEDLETEIDSIRTALVALRKKKREAKEKMKSATDKQKLALEECVTKLEDSCRVKEGDRVDLELKLTQVKENLKKSLAGGEMEVPTESKPAHKTQRTEAQYMESFLPVNCASEMRKRPPSIYASTKGNVMQKAKEWESKKGT</sequence>
<organism>
    <name type="scientific">Danio rerio</name>
    <name type="common">Zebrafish</name>
    <name type="synonym">Brachydanio rerio</name>
    <dbReference type="NCBI Taxonomy" id="7955"/>
    <lineage>
        <taxon>Eukaryota</taxon>
        <taxon>Metazoa</taxon>
        <taxon>Chordata</taxon>
        <taxon>Craniata</taxon>
        <taxon>Vertebrata</taxon>
        <taxon>Euteleostomi</taxon>
        <taxon>Actinopterygii</taxon>
        <taxon>Neopterygii</taxon>
        <taxon>Teleostei</taxon>
        <taxon>Ostariophysi</taxon>
        <taxon>Cypriniformes</taxon>
        <taxon>Danionidae</taxon>
        <taxon>Danioninae</taxon>
        <taxon>Danio</taxon>
    </lineage>
</organism>
<reference key="1">
    <citation type="submission" date="2005-06" db="EMBL/GenBank/DDBJ databases">
        <authorList>
            <consortium name="NIH - Zebrafish Gene Collection (ZGC) project"/>
        </authorList>
    </citation>
    <scope>NUCLEOTIDE SEQUENCE [LARGE SCALE MRNA]</scope>
    <source>
        <tissue>Embryo</tissue>
    </source>
</reference>
<accession>Q4V8Y7</accession>
<keyword id="KW-0965">Cell junction</keyword>
<keyword id="KW-0966">Cell projection</keyword>
<keyword id="KW-0175">Coiled coil</keyword>
<keyword id="KW-0963">Cytoplasm</keyword>
<keyword id="KW-0206">Cytoskeleton</keyword>
<keyword id="KW-1185">Reference proteome</keyword>
<keyword id="KW-0677">Repeat</keyword>
<proteinExistence type="evidence at transcript level"/>
<feature type="chain" id="PRO_0000295241" description="Actin filament-associated protein 1-like 1">
    <location>
        <begin position="1"/>
        <end position="746"/>
    </location>
</feature>
<feature type="domain" description="PH 1" evidence="4">
    <location>
        <begin position="214"/>
        <end position="310"/>
    </location>
</feature>
<feature type="domain" description="PH 2" evidence="4">
    <location>
        <begin position="406"/>
        <end position="497"/>
    </location>
</feature>
<feature type="region of interest" description="Disordered" evidence="5">
    <location>
        <begin position="88"/>
        <end position="206"/>
    </location>
</feature>
<feature type="region of interest" description="Disordered" evidence="5">
    <location>
        <begin position="336"/>
        <end position="371"/>
    </location>
</feature>
<feature type="region of interest" description="Disordered" evidence="5">
    <location>
        <begin position="539"/>
        <end position="596"/>
    </location>
</feature>
<feature type="region of interest" description="Disordered" evidence="5">
    <location>
        <begin position="723"/>
        <end position="746"/>
    </location>
</feature>
<feature type="coiled-coil region" evidence="3">
    <location>
        <begin position="591"/>
        <end position="682"/>
    </location>
</feature>
<feature type="compositionally biased region" description="Polar residues" evidence="5">
    <location>
        <begin position="98"/>
        <end position="107"/>
    </location>
</feature>
<feature type="compositionally biased region" description="Pro residues" evidence="5">
    <location>
        <begin position="108"/>
        <end position="119"/>
    </location>
</feature>
<feature type="compositionally biased region" description="Low complexity" evidence="5">
    <location>
        <begin position="139"/>
        <end position="148"/>
    </location>
</feature>
<feature type="compositionally biased region" description="Basic and acidic residues" evidence="5">
    <location>
        <begin position="350"/>
        <end position="359"/>
    </location>
</feature>
<feature type="compositionally biased region" description="Polar residues" evidence="5">
    <location>
        <begin position="562"/>
        <end position="575"/>
    </location>
</feature>
<feature type="compositionally biased region" description="Basic and acidic residues" evidence="5">
    <location>
        <begin position="736"/>
        <end position="746"/>
    </location>
</feature>
<dbReference type="EMBL" id="BC097145">
    <property type="protein sequence ID" value="AAH97145.1"/>
    <property type="molecule type" value="mRNA"/>
</dbReference>
<dbReference type="RefSeq" id="NP_001025384.1">
    <property type="nucleotide sequence ID" value="NM_001030213.1"/>
</dbReference>
<dbReference type="SMR" id="Q4V8Y7"/>
<dbReference type="FunCoup" id="Q4V8Y7">
    <property type="interactions" value="2094"/>
</dbReference>
<dbReference type="STRING" id="7955.ENSDARP00000111322"/>
<dbReference type="PaxDb" id="7955-ENSDARP00000111322"/>
<dbReference type="GeneID" id="566757"/>
<dbReference type="KEGG" id="dre:566757"/>
<dbReference type="AGR" id="ZFIN:ZDB-GENE-050913-76"/>
<dbReference type="CTD" id="566757"/>
<dbReference type="ZFIN" id="ZDB-GENE-050913-76">
    <property type="gene designation" value="afap1l1a"/>
</dbReference>
<dbReference type="eggNOG" id="ENOG502R3HG">
    <property type="taxonomic scope" value="Eukaryota"/>
</dbReference>
<dbReference type="InParanoid" id="Q4V8Y7"/>
<dbReference type="OrthoDB" id="9937741at2759"/>
<dbReference type="PhylomeDB" id="Q4V8Y7"/>
<dbReference type="PRO" id="PR:Q4V8Y7"/>
<dbReference type="Proteomes" id="UP000000437">
    <property type="component" value="Alternate scaffold 14"/>
</dbReference>
<dbReference type="Proteomes" id="UP000000437">
    <property type="component" value="Chromosome 14"/>
</dbReference>
<dbReference type="GO" id="GO:0070161">
    <property type="term" value="C:anchoring junction"/>
    <property type="evidence" value="ECO:0007669"/>
    <property type="project" value="UniProtKB-KW"/>
</dbReference>
<dbReference type="GO" id="GO:0042995">
    <property type="term" value="C:cell projection"/>
    <property type="evidence" value="ECO:0007669"/>
    <property type="project" value="UniProtKB-SubCell"/>
</dbReference>
<dbReference type="GO" id="GO:0005829">
    <property type="term" value="C:cytosol"/>
    <property type="evidence" value="ECO:0000318"/>
    <property type="project" value="GO_Central"/>
</dbReference>
<dbReference type="GO" id="GO:0002102">
    <property type="term" value="C:podosome"/>
    <property type="evidence" value="ECO:0007669"/>
    <property type="project" value="UniProtKB-SubCell"/>
</dbReference>
<dbReference type="GO" id="GO:0001725">
    <property type="term" value="C:stress fiber"/>
    <property type="evidence" value="ECO:0007669"/>
    <property type="project" value="UniProtKB-SubCell"/>
</dbReference>
<dbReference type="CDD" id="cd13306">
    <property type="entry name" value="PH1_AFAP"/>
    <property type="match status" value="1"/>
</dbReference>
<dbReference type="CDD" id="cd13307">
    <property type="entry name" value="PH2_AFAP"/>
    <property type="match status" value="1"/>
</dbReference>
<dbReference type="FunFam" id="2.30.29.30:FF:000189">
    <property type="entry name" value="Actin filament associated protein 1-like 1"/>
    <property type="match status" value="1"/>
</dbReference>
<dbReference type="FunFam" id="2.30.29.30:FF:000020">
    <property type="entry name" value="Actin filament-associated protein 1-like 2 isoform 1"/>
    <property type="match status" value="1"/>
</dbReference>
<dbReference type="Gene3D" id="2.30.29.30">
    <property type="entry name" value="Pleckstrin-homology domain (PH domain)/Phosphotyrosine-binding domain (PTB)"/>
    <property type="match status" value="2"/>
</dbReference>
<dbReference type="InterPro" id="IPR030113">
    <property type="entry name" value="AFAP"/>
</dbReference>
<dbReference type="InterPro" id="IPR011993">
    <property type="entry name" value="PH-like_dom_sf"/>
</dbReference>
<dbReference type="InterPro" id="IPR001849">
    <property type="entry name" value="PH_domain"/>
</dbReference>
<dbReference type="PANTHER" id="PTHR14338">
    <property type="entry name" value="ACTIN FILAMENT-ASSOCIATED PROTEIN 1 FAMILY MEMBER"/>
    <property type="match status" value="1"/>
</dbReference>
<dbReference type="PANTHER" id="PTHR14338:SF1">
    <property type="entry name" value="ACTIN FILAMENT-ASSOCIATED PROTEIN 1-LIKE 1"/>
    <property type="match status" value="1"/>
</dbReference>
<dbReference type="Pfam" id="PF00169">
    <property type="entry name" value="PH"/>
    <property type="match status" value="2"/>
</dbReference>
<dbReference type="SMART" id="SM00233">
    <property type="entry name" value="PH"/>
    <property type="match status" value="2"/>
</dbReference>
<dbReference type="SUPFAM" id="SSF50729">
    <property type="entry name" value="PH domain-like"/>
    <property type="match status" value="2"/>
</dbReference>
<dbReference type="PROSITE" id="PS50003">
    <property type="entry name" value="PH_DOMAIN"/>
    <property type="match status" value="2"/>
</dbReference>
<protein>
    <recommendedName>
        <fullName>Actin filament-associated protein 1-like 1</fullName>
        <shortName>AFAP1-like protein 1</shortName>
    </recommendedName>
</protein>